<keyword id="KW-0150">Chloroplast</keyword>
<keyword id="KW-0507">mRNA processing</keyword>
<keyword id="KW-0934">Plastid</keyword>
<keyword id="KW-0694">RNA-binding</keyword>
<keyword id="KW-0819">tRNA processing</keyword>
<reference key="1">
    <citation type="submission" date="2003-06" db="EMBL/GenBank/DDBJ databases">
        <title>Phylogenetic analysis of Malvaceae sensu lato based on chloroplast and nuclear DNA sequences.</title>
        <authorList>
            <person name="Nyffeler R."/>
            <person name="Yen A."/>
            <person name="Alverson W.S."/>
            <person name="Bayer C."/>
            <person name="Blattner F."/>
            <person name="Whitlock B."/>
            <person name="Chase M.W."/>
            <person name="Baum D.A."/>
        </authorList>
    </citation>
    <scope>NUCLEOTIDE SEQUENCE [GENOMIC DNA]</scope>
</reference>
<geneLocation type="chloroplast"/>
<comment type="function">
    <text evidence="1">Usually encoded in the trnK tRNA gene intron. Probably assists in splicing its own and other chloroplast group II introns.</text>
</comment>
<comment type="subcellular location">
    <subcellularLocation>
        <location>Plastid</location>
        <location>Chloroplast</location>
    </subcellularLocation>
</comment>
<comment type="similarity">
    <text evidence="1">Belongs to the intron maturase 2 family. MatK subfamily.</text>
</comment>
<organism>
    <name type="scientific">Pachira aquatica</name>
    <name type="common">Guiana chestnut</name>
    <dbReference type="NCBI Taxonomy" id="69118"/>
    <lineage>
        <taxon>Eukaryota</taxon>
        <taxon>Viridiplantae</taxon>
        <taxon>Streptophyta</taxon>
        <taxon>Embryophyta</taxon>
        <taxon>Tracheophyta</taxon>
        <taxon>Spermatophyta</taxon>
        <taxon>Magnoliopsida</taxon>
        <taxon>eudicotyledons</taxon>
        <taxon>Gunneridae</taxon>
        <taxon>Pentapetalae</taxon>
        <taxon>rosids</taxon>
        <taxon>malvids</taxon>
        <taxon>Malvales</taxon>
        <taxon>Malvaceae</taxon>
        <taxon>Bombacoideae</taxon>
        <taxon>Pachira</taxon>
    </lineage>
</organism>
<accession>Q6EIJ4</accession>
<dbReference type="EMBL" id="AY321170">
    <property type="protein sequence ID" value="AAQ84252.1"/>
    <property type="molecule type" value="Genomic_DNA"/>
</dbReference>
<dbReference type="GO" id="GO:0009507">
    <property type="term" value="C:chloroplast"/>
    <property type="evidence" value="ECO:0007669"/>
    <property type="project" value="UniProtKB-SubCell"/>
</dbReference>
<dbReference type="GO" id="GO:0003723">
    <property type="term" value="F:RNA binding"/>
    <property type="evidence" value="ECO:0007669"/>
    <property type="project" value="UniProtKB-KW"/>
</dbReference>
<dbReference type="GO" id="GO:0006397">
    <property type="term" value="P:mRNA processing"/>
    <property type="evidence" value="ECO:0007669"/>
    <property type="project" value="UniProtKB-KW"/>
</dbReference>
<dbReference type="GO" id="GO:0008380">
    <property type="term" value="P:RNA splicing"/>
    <property type="evidence" value="ECO:0007669"/>
    <property type="project" value="UniProtKB-UniRule"/>
</dbReference>
<dbReference type="GO" id="GO:0008033">
    <property type="term" value="P:tRNA processing"/>
    <property type="evidence" value="ECO:0007669"/>
    <property type="project" value="UniProtKB-KW"/>
</dbReference>
<dbReference type="HAMAP" id="MF_01390">
    <property type="entry name" value="MatK"/>
    <property type="match status" value="1"/>
</dbReference>
<dbReference type="InterPro" id="IPR024937">
    <property type="entry name" value="Domain_X"/>
</dbReference>
<dbReference type="InterPro" id="IPR002866">
    <property type="entry name" value="Maturase_MatK"/>
</dbReference>
<dbReference type="InterPro" id="IPR024942">
    <property type="entry name" value="Maturase_MatK_N"/>
</dbReference>
<dbReference type="PANTHER" id="PTHR34811">
    <property type="entry name" value="MATURASE K"/>
    <property type="match status" value="1"/>
</dbReference>
<dbReference type="PANTHER" id="PTHR34811:SF1">
    <property type="entry name" value="MATURASE K"/>
    <property type="match status" value="1"/>
</dbReference>
<dbReference type="Pfam" id="PF01348">
    <property type="entry name" value="Intron_maturas2"/>
    <property type="match status" value="1"/>
</dbReference>
<dbReference type="Pfam" id="PF01824">
    <property type="entry name" value="MatK_N"/>
    <property type="match status" value="1"/>
</dbReference>
<feature type="chain" id="PRO_0000143565" description="Maturase K">
    <location>
        <begin position="1"/>
        <end position="504"/>
    </location>
</feature>
<gene>
    <name evidence="1" type="primary">matK</name>
</gene>
<name>MATK_PACAQ</name>
<proteinExistence type="inferred from homology"/>
<sequence>MEEFQVYLELNRSRRHDFLYPLIFREYIYALAHDHGLNKSMIFLENQGYGNKFSSLIVKRLIIRMDQQNHLIISANDSNQNPFFGHKKNLYSQMISAGFAVIVEIPFSLRLVSYSQGEEVAKSHNLQSIHSIFPFLEDKFSHLNYVLDVLIPYPIHLEILVQALRYWVKDASSLHLLRFSLYEYCNLKSFITPKKSISIFNPRLFFFLYNSHACEYESIFLFLRNQSSHLRSTSSGVFLERIYFYGKIDYLVEVFSNDFQNNLWLFKDPFTHFIRYQGKAILASKDTSLLMNKWKYYFVDLWQYYFYMWSQSGRFRINQLSKYSLDFLGYLSSVRLNPSVVRSQMLENSFIIDNAMKKLDTRIPIISLIGSLSKAKFCNTLGHPISKPTWADSSDSDIIDRFVRICRNLSHYHSGSSKKKSLYRIKYILRFSCVKTLARKHKSTVRAFLKRLGSEFLEEFFTETEEEHFFSLIFPRVFFTSRKLYRGRIWYLDIICINALVNHE</sequence>
<evidence type="ECO:0000255" key="1">
    <source>
        <dbReference type="HAMAP-Rule" id="MF_01390"/>
    </source>
</evidence>
<protein>
    <recommendedName>
        <fullName evidence="1">Maturase K</fullName>
    </recommendedName>
    <alternativeName>
        <fullName evidence="1">Intron maturase</fullName>
    </alternativeName>
</protein>